<keyword id="KW-0963">Cytoplasm</keyword>
<keyword id="KW-0238">DNA-binding</keyword>
<keyword id="KW-0804">Transcription</keyword>
<keyword id="KW-0805">Transcription regulation</keyword>
<proteinExistence type="inferred from homology"/>
<protein>
    <recommendedName>
        <fullName evidence="1">Probable transcriptional regulatory protein YeeN</fullName>
    </recommendedName>
</protein>
<name>YEEN_ECOUT</name>
<organism>
    <name type="scientific">Escherichia coli (strain UTI89 / UPEC)</name>
    <dbReference type="NCBI Taxonomy" id="364106"/>
    <lineage>
        <taxon>Bacteria</taxon>
        <taxon>Pseudomonadati</taxon>
        <taxon>Pseudomonadota</taxon>
        <taxon>Gammaproteobacteria</taxon>
        <taxon>Enterobacterales</taxon>
        <taxon>Enterobacteriaceae</taxon>
        <taxon>Escherichia</taxon>
    </lineage>
</organism>
<comment type="subcellular location">
    <subcellularLocation>
        <location evidence="1">Cytoplasm</location>
    </subcellularLocation>
</comment>
<comment type="similarity">
    <text evidence="1">Belongs to the TACO1 family. YeeN subfamily.</text>
</comment>
<evidence type="ECO:0000255" key="1">
    <source>
        <dbReference type="HAMAP-Rule" id="MF_00918"/>
    </source>
</evidence>
<sequence length="238" mass="25867">MGRKWANIVAKKTAKDGATSKIYAKFGVEIYAAAKQGEPDPELNTSLKFVIERAKQAQVPKHVIDKAIDKAKGGGDETFVQGRYEGFGPNGSMIIAETLTSNVNRTIANVRTIFNKKGGNIGAAGSVSYMFDNTGVIVFKGTDPDHIFEILLEAEVDVRDVTEEEGNIVIYTEPTDLHKGIAALKAAGITEFSTTELEMIAQSEVELSPEDLEIFEGLVDALEDDDDVQKVYHNVANL</sequence>
<gene>
    <name evidence="1" type="primary">yeeN</name>
    <name type="ordered locus">UTI89_C2196</name>
</gene>
<accession>Q1RAE7</accession>
<feature type="chain" id="PRO_0000257063" description="Probable transcriptional regulatory protein YeeN">
    <location>
        <begin position="1"/>
        <end position="238"/>
    </location>
</feature>
<reference key="1">
    <citation type="journal article" date="2006" name="Proc. Natl. Acad. Sci. U.S.A.">
        <title>Identification of genes subject to positive selection in uropathogenic strains of Escherichia coli: a comparative genomics approach.</title>
        <authorList>
            <person name="Chen S.L."/>
            <person name="Hung C.-S."/>
            <person name="Xu J."/>
            <person name="Reigstad C.S."/>
            <person name="Magrini V."/>
            <person name="Sabo A."/>
            <person name="Blasiar D."/>
            <person name="Bieri T."/>
            <person name="Meyer R.R."/>
            <person name="Ozersky P."/>
            <person name="Armstrong J.R."/>
            <person name="Fulton R.S."/>
            <person name="Latreille J.P."/>
            <person name="Spieth J."/>
            <person name="Hooton T.M."/>
            <person name="Mardis E.R."/>
            <person name="Hultgren S.J."/>
            <person name="Gordon J.I."/>
        </authorList>
    </citation>
    <scope>NUCLEOTIDE SEQUENCE [LARGE SCALE GENOMIC DNA]</scope>
    <source>
        <strain>UTI89 / UPEC</strain>
    </source>
</reference>
<dbReference type="EMBL" id="CP000243">
    <property type="protein sequence ID" value="ABE07667.1"/>
    <property type="molecule type" value="Genomic_DNA"/>
</dbReference>
<dbReference type="RefSeq" id="WP_000532923.1">
    <property type="nucleotide sequence ID" value="NZ_CP064825.1"/>
</dbReference>
<dbReference type="SMR" id="Q1RAE7"/>
<dbReference type="KEGG" id="eci:UTI89_C2196"/>
<dbReference type="HOGENOM" id="CLU_062974_2_0_6"/>
<dbReference type="Proteomes" id="UP000001952">
    <property type="component" value="Chromosome"/>
</dbReference>
<dbReference type="GO" id="GO:0005829">
    <property type="term" value="C:cytosol"/>
    <property type="evidence" value="ECO:0007669"/>
    <property type="project" value="TreeGrafter"/>
</dbReference>
<dbReference type="GO" id="GO:0003677">
    <property type="term" value="F:DNA binding"/>
    <property type="evidence" value="ECO:0007669"/>
    <property type="project" value="UniProtKB-UniRule"/>
</dbReference>
<dbReference type="GO" id="GO:0006355">
    <property type="term" value="P:regulation of DNA-templated transcription"/>
    <property type="evidence" value="ECO:0007669"/>
    <property type="project" value="UniProtKB-UniRule"/>
</dbReference>
<dbReference type="FunFam" id="1.10.10.200:FF:000003">
    <property type="entry name" value="Probable transcriptional regulatory protein YeeN"/>
    <property type="match status" value="1"/>
</dbReference>
<dbReference type="FunFam" id="3.30.70.980:FF:000004">
    <property type="entry name" value="Probable transcriptional regulatory protein YeeN"/>
    <property type="match status" value="1"/>
</dbReference>
<dbReference type="Gene3D" id="1.10.10.200">
    <property type="match status" value="1"/>
</dbReference>
<dbReference type="Gene3D" id="3.30.70.980">
    <property type="match status" value="2"/>
</dbReference>
<dbReference type="HAMAP" id="MF_00693">
    <property type="entry name" value="Transcrip_reg_TACO1"/>
    <property type="match status" value="1"/>
</dbReference>
<dbReference type="HAMAP" id="MF_00918">
    <property type="entry name" value="Transcrip_reg_TACO1_YeeN"/>
    <property type="match status" value="1"/>
</dbReference>
<dbReference type="InterPro" id="IPR017856">
    <property type="entry name" value="Integrase-like_N"/>
</dbReference>
<dbReference type="InterPro" id="IPR048300">
    <property type="entry name" value="TACO1_YebC-like_2nd/3rd_dom"/>
</dbReference>
<dbReference type="InterPro" id="IPR049083">
    <property type="entry name" value="TACO1_YebC_N"/>
</dbReference>
<dbReference type="InterPro" id="IPR002876">
    <property type="entry name" value="Transcrip_reg_TACO1-like"/>
</dbReference>
<dbReference type="InterPro" id="IPR026564">
    <property type="entry name" value="Transcrip_reg_TACO1-like_dom3"/>
</dbReference>
<dbReference type="InterPro" id="IPR026562">
    <property type="entry name" value="Transcrip_reg_TACO1_YeeN"/>
</dbReference>
<dbReference type="InterPro" id="IPR029072">
    <property type="entry name" value="YebC-like"/>
</dbReference>
<dbReference type="NCBIfam" id="NF009044">
    <property type="entry name" value="PRK12378.1"/>
    <property type="match status" value="1"/>
</dbReference>
<dbReference type="NCBIfam" id="TIGR01033">
    <property type="entry name" value="YebC/PmpR family DNA-binding transcriptional regulator"/>
    <property type="match status" value="1"/>
</dbReference>
<dbReference type="PANTHER" id="PTHR12532">
    <property type="entry name" value="TRANSLATIONAL ACTIVATOR OF CYTOCHROME C OXIDASE 1"/>
    <property type="match status" value="1"/>
</dbReference>
<dbReference type="PANTHER" id="PTHR12532:SF0">
    <property type="entry name" value="TRANSLATIONAL ACTIVATOR OF CYTOCHROME C OXIDASE 1"/>
    <property type="match status" value="1"/>
</dbReference>
<dbReference type="Pfam" id="PF20772">
    <property type="entry name" value="TACO1_YebC_N"/>
    <property type="match status" value="1"/>
</dbReference>
<dbReference type="Pfam" id="PF01709">
    <property type="entry name" value="Transcrip_reg"/>
    <property type="match status" value="1"/>
</dbReference>
<dbReference type="SUPFAM" id="SSF75625">
    <property type="entry name" value="YebC-like"/>
    <property type="match status" value="1"/>
</dbReference>